<comment type="function">
    <text evidence="3 4 5 6 8">Functions as a component of the nuclear pore complex (NPC). NPC components, collectively referred to as nucleoporins (NUPs), can play the role of both NPC structural components and of docking or interaction partners for transiently associated nuclear transport factors. It is specifically involved in a terminal step of poly(A)+ mRNA transport through the NPC probably by binding the ATP-dependent RNA helicase DBP5 and GFD1 at the cytoplasmic side of the NPC. These interactions are thought to be important for the dissociation of transport proteins such as the heterogeneous nuclear ribonucleoprotein (hnRNP) NAB2 from exported mRNA.</text>
</comment>
<comment type="subunit">
    <text evidence="4 8">Component of the nuclear pore complex (NPC). NPC constitutes the exclusive means of nucleocytoplasmic transport. NPCs allow the passive diffusion of ions and small molecules and the active, nuclear transport receptor-mediated bidirectional transport of macromolecules such as proteins, RNAs, ribonucleoparticles (RNPs), and ribosomal subunits across the nuclear envelope. Due to its 8-fold rotational symmetry, all subunits are present with 8 copies or multiples thereof. GLE1 interacts with the NUP82 subcomplex via NUP42. It also interacts with GFD1 and the ATP-dependent RNA helicase DBP5.</text>
</comment>
<comment type="interaction">
    <interactant intactId="EBI-7635">
        <id>Q12315</id>
    </interactant>
    <interactant intactId="EBI-5617">
        <id>P20449</id>
        <label>DBP5</label>
    </interactant>
    <organismsDiffer>false</organismsDiffer>
    <experiments>8</experiments>
</comment>
<comment type="interaction">
    <interactant intactId="EBI-7635">
        <id>Q12315</id>
    </interactant>
    <interactant intactId="EBI-12310">
        <id>P49686</id>
        <label>NUP42</label>
    </interactant>
    <organismsDiffer>false</organismsDiffer>
    <experiments>7</experiments>
</comment>
<comment type="interaction">
    <interactant intactId="EBI-7635">
        <id>Q12315</id>
    </interactant>
    <interactant intactId="EBI-6540">
        <id>P05453</id>
        <label>SUP35</label>
    </interactant>
    <organismsDiffer>false</organismsDiffer>
    <experiments>2</experiments>
</comment>
<comment type="subcellular location">
    <subcellularLocation>
        <location evidence="3">Nucleus</location>
        <location evidence="3">Nuclear pore complex</location>
    </subcellularLocation>
    <subcellularLocation>
        <location evidence="3">Nucleus membrane</location>
        <topology evidence="3">Peripheral membrane protein</topology>
        <orientation evidence="3">Cytoplasmic side</orientation>
    </subcellularLocation>
    <subcellularLocation>
        <location evidence="3">Nucleus membrane</location>
        <topology evidence="3">Peripheral membrane protein</topology>
        <orientation evidence="3">Nucleoplasmic side</orientation>
    </subcellularLocation>
    <text>Biased towards cytoplasmic side.</text>
</comment>
<comment type="miscellaneous">
    <text evidence="7">Present with 1040 molecules/cell in log phase SD medium.</text>
</comment>
<comment type="similarity">
    <text evidence="11">Belongs to the GLE1 family.</text>
</comment>
<gene>
    <name type="primary">GLE1</name>
    <name type="synonym">BRR3</name>
    <name type="synonym">RSS1</name>
    <name type="ordered locus">YDL207W</name>
    <name type="ORF">D1049</name>
</gene>
<name>GLE1_YEAST</name>
<organism>
    <name type="scientific">Saccharomyces cerevisiae (strain ATCC 204508 / S288c)</name>
    <name type="common">Baker's yeast</name>
    <dbReference type="NCBI Taxonomy" id="559292"/>
    <lineage>
        <taxon>Eukaryota</taxon>
        <taxon>Fungi</taxon>
        <taxon>Dikarya</taxon>
        <taxon>Ascomycota</taxon>
        <taxon>Saccharomycotina</taxon>
        <taxon>Saccharomycetes</taxon>
        <taxon>Saccharomycetales</taxon>
        <taxon>Saccharomycetaceae</taxon>
        <taxon>Saccharomyces</taxon>
    </lineage>
</organism>
<evidence type="ECO:0000255" key="1"/>
<evidence type="ECO:0000256" key="2">
    <source>
        <dbReference type="SAM" id="MobiDB-lite"/>
    </source>
</evidence>
<evidence type="ECO:0000269" key="3">
    <source>
    </source>
</evidence>
<evidence type="ECO:0000269" key="4">
    <source>
    </source>
</evidence>
<evidence type="ECO:0000269" key="5">
    <source>
    </source>
</evidence>
<evidence type="ECO:0000269" key="6">
    <source>
    </source>
</evidence>
<evidence type="ECO:0000269" key="7">
    <source>
    </source>
</evidence>
<evidence type="ECO:0000269" key="8">
    <source>
    </source>
</evidence>
<evidence type="ECO:0000269" key="9">
    <source>
    </source>
</evidence>
<evidence type="ECO:0000303" key="10">
    <source>
    </source>
</evidence>
<evidence type="ECO:0000305" key="11"/>
<evidence type="ECO:0007829" key="12">
    <source>
        <dbReference type="PDB" id="6B4E"/>
    </source>
</evidence>
<dbReference type="EMBL" id="U68475">
    <property type="protein sequence ID" value="AAC49444.1"/>
    <property type="molecule type" value="Genomic_DNA"/>
</dbReference>
<dbReference type="EMBL" id="X99000">
    <property type="protein sequence ID" value="CAA67484.1"/>
    <property type="molecule type" value="Genomic_DNA"/>
</dbReference>
<dbReference type="EMBL" id="Z74255">
    <property type="protein sequence ID" value="CAA98785.1"/>
    <property type="molecule type" value="Genomic_DNA"/>
</dbReference>
<dbReference type="EMBL" id="BK006938">
    <property type="protein sequence ID" value="DAA11657.1"/>
    <property type="molecule type" value="Genomic_DNA"/>
</dbReference>
<dbReference type="PIR" id="S67766">
    <property type="entry name" value="S67766"/>
</dbReference>
<dbReference type="RefSeq" id="NP_010074.1">
    <property type="nucleotide sequence ID" value="NM_001180267.1"/>
</dbReference>
<dbReference type="PDB" id="3PEU">
    <property type="method" value="X-ray"/>
    <property type="resolution" value="2.60 A"/>
    <property type="chains" value="B=244-538"/>
</dbReference>
<dbReference type="PDB" id="3PEV">
    <property type="method" value="X-ray"/>
    <property type="resolution" value="2.50 A"/>
    <property type="chains" value="B=244-538"/>
</dbReference>
<dbReference type="PDB" id="3RRM">
    <property type="method" value="X-ray"/>
    <property type="resolution" value="2.88 A"/>
    <property type="chains" value="B=244-538"/>
</dbReference>
<dbReference type="PDB" id="3RRN">
    <property type="method" value="X-ray"/>
    <property type="resolution" value="4.00 A"/>
    <property type="chains" value="B=244-538"/>
</dbReference>
<dbReference type="PDB" id="6B4E">
    <property type="method" value="X-ray"/>
    <property type="resolution" value="1.75 A"/>
    <property type="chains" value="A/B=244-538"/>
</dbReference>
<dbReference type="PDBsum" id="3PEU"/>
<dbReference type="PDBsum" id="3PEV"/>
<dbReference type="PDBsum" id="3RRM"/>
<dbReference type="PDBsum" id="3RRN"/>
<dbReference type="PDBsum" id="6B4E"/>
<dbReference type="SMR" id="Q12315"/>
<dbReference type="BioGRID" id="31839">
    <property type="interactions" value="462"/>
</dbReference>
<dbReference type="ComplexPortal" id="CPX-824">
    <property type="entry name" value="Nuclear pore complex"/>
</dbReference>
<dbReference type="DIP" id="DIP-2350N"/>
<dbReference type="FunCoup" id="Q12315">
    <property type="interactions" value="165"/>
</dbReference>
<dbReference type="IntAct" id="Q12315">
    <property type="interactions" value="37"/>
</dbReference>
<dbReference type="MINT" id="Q12315"/>
<dbReference type="STRING" id="4932.YDL207W"/>
<dbReference type="TCDB" id="1.I.1.1.1">
    <property type="family name" value="the nuclear pore complex (npc) family"/>
</dbReference>
<dbReference type="GlyGen" id="Q12315">
    <property type="glycosylation" value="2 sites, 1 O-linked glycan (2 sites)"/>
</dbReference>
<dbReference type="iPTMnet" id="Q12315"/>
<dbReference type="PaxDb" id="4932-YDL207W"/>
<dbReference type="PeptideAtlas" id="Q12315"/>
<dbReference type="EnsemblFungi" id="YDL207W_mRNA">
    <property type="protein sequence ID" value="YDL207W"/>
    <property type="gene ID" value="YDL207W"/>
</dbReference>
<dbReference type="GeneID" id="851320"/>
<dbReference type="KEGG" id="sce:YDL207W"/>
<dbReference type="AGR" id="SGD:S000002366"/>
<dbReference type="SGD" id="S000002366">
    <property type="gene designation" value="GLE1"/>
</dbReference>
<dbReference type="VEuPathDB" id="FungiDB:YDL207W"/>
<dbReference type="eggNOG" id="KOG2412">
    <property type="taxonomic scope" value="Eukaryota"/>
</dbReference>
<dbReference type="GeneTree" id="ENSGT00390000012903"/>
<dbReference type="HOGENOM" id="CLU_029651_0_0_1"/>
<dbReference type="InParanoid" id="Q12315"/>
<dbReference type="OMA" id="VPANIHS"/>
<dbReference type="OrthoDB" id="420884at2759"/>
<dbReference type="BioCyc" id="YEAST:G3O-29589-MONOMER"/>
<dbReference type="Reactome" id="R-SCE-159236">
    <property type="pathway name" value="Transport of Mature mRNA derived from an Intron-Containing Transcript"/>
</dbReference>
<dbReference type="BioGRID-ORCS" id="851320">
    <property type="hits" value="4 hits in 10 CRISPR screens"/>
</dbReference>
<dbReference type="EvolutionaryTrace" id="Q12315"/>
<dbReference type="PRO" id="PR:Q12315"/>
<dbReference type="Proteomes" id="UP000002311">
    <property type="component" value="Chromosome IV"/>
</dbReference>
<dbReference type="RNAct" id="Q12315">
    <property type="molecule type" value="protein"/>
</dbReference>
<dbReference type="GO" id="GO:0005737">
    <property type="term" value="C:cytoplasm"/>
    <property type="evidence" value="ECO:0000314"/>
    <property type="project" value="SGD"/>
</dbReference>
<dbReference type="GO" id="GO:0005739">
    <property type="term" value="C:mitochondrion"/>
    <property type="evidence" value="ECO:0007005"/>
    <property type="project" value="SGD"/>
</dbReference>
<dbReference type="GO" id="GO:0005635">
    <property type="term" value="C:nuclear envelope"/>
    <property type="evidence" value="ECO:0000303"/>
    <property type="project" value="ComplexPortal"/>
</dbReference>
<dbReference type="GO" id="GO:0031965">
    <property type="term" value="C:nuclear membrane"/>
    <property type="evidence" value="ECO:0007669"/>
    <property type="project" value="UniProtKB-SubCell"/>
</dbReference>
<dbReference type="GO" id="GO:0005643">
    <property type="term" value="C:nuclear pore"/>
    <property type="evidence" value="ECO:0000314"/>
    <property type="project" value="SGD"/>
</dbReference>
<dbReference type="GO" id="GO:0044614">
    <property type="term" value="C:nuclear pore cytoplasmic filaments"/>
    <property type="evidence" value="ECO:0000314"/>
    <property type="project" value="SGD"/>
</dbReference>
<dbReference type="GO" id="GO:0008047">
    <property type="term" value="F:enzyme activator activity"/>
    <property type="evidence" value="ECO:0000314"/>
    <property type="project" value="SGD"/>
</dbReference>
<dbReference type="GO" id="GO:0000822">
    <property type="term" value="F:inositol hexakisphosphate binding"/>
    <property type="evidence" value="ECO:0000314"/>
    <property type="project" value="SGD"/>
</dbReference>
<dbReference type="GO" id="GO:0005543">
    <property type="term" value="F:phospholipid binding"/>
    <property type="evidence" value="ECO:0000314"/>
    <property type="project" value="SGD"/>
</dbReference>
<dbReference type="GO" id="GO:0031369">
    <property type="term" value="F:translation initiation factor binding"/>
    <property type="evidence" value="ECO:0000353"/>
    <property type="project" value="SGD"/>
</dbReference>
<dbReference type="GO" id="GO:0006406">
    <property type="term" value="P:mRNA export from nucleus"/>
    <property type="evidence" value="ECO:0000315"/>
    <property type="project" value="SGD"/>
</dbReference>
<dbReference type="GO" id="GO:0006397">
    <property type="term" value="P:mRNA processing"/>
    <property type="evidence" value="ECO:0007669"/>
    <property type="project" value="UniProtKB-KW"/>
</dbReference>
<dbReference type="GO" id="GO:0006913">
    <property type="term" value="P:nucleocytoplasmic transport"/>
    <property type="evidence" value="ECO:0000303"/>
    <property type="project" value="ComplexPortal"/>
</dbReference>
<dbReference type="GO" id="GO:0016973">
    <property type="term" value="P:poly(A)+ mRNA export from nucleus"/>
    <property type="evidence" value="ECO:0000315"/>
    <property type="project" value="SGD"/>
</dbReference>
<dbReference type="GO" id="GO:0015031">
    <property type="term" value="P:protein transport"/>
    <property type="evidence" value="ECO:0007669"/>
    <property type="project" value="UniProtKB-KW"/>
</dbReference>
<dbReference type="GO" id="GO:0006446">
    <property type="term" value="P:regulation of translational initiation"/>
    <property type="evidence" value="ECO:0000315"/>
    <property type="project" value="SGD"/>
</dbReference>
<dbReference type="GO" id="GO:0006449">
    <property type="term" value="P:regulation of translational termination"/>
    <property type="evidence" value="ECO:0000315"/>
    <property type="project" value="SGD"/>
</dbReference>
<dbReference type="GO" id="GO:0006409">
    <property type="term" value="P:tRNA export from nucleus"/>
    <property type="evidence" value="ECO:0000314"/>
    <property type="project" value="SGD"/>
</dbReference>
<dbReference type="FunFam" id="1.25.40.510:FF:000003">
    <property type="entry name" value="Nucleoporin GLE1"/>
    <property type="match status" value="1"/>
</dbReference>
<dbReference type="Gene3D" id="1.25.40.510">
    <property type="entry name" value="GLE1-like"/>
    <property type="match status" value="1"/>
</dbReference>
<dbReference type="InterPro" id="IPR012476">
    <property type="entry name" value="GLE1"/>
</dbReference>
<dbReference type="InterPro" id="IPR038506">
    <property type="entry name" value="GLE1-like_sf"/>
</dbReference>
<dbReference type="PANTHER" id="PTHR12960">
    <property type="entry name" value="GLE-1-RELATED"/>
    <property type="match status" value="1"/>
</dbReference>
<dbReference type="PANTHER" id="PTHR12960:SF0">
    <property type="entry name" value="MRNA EXPORT FACTOR GLE1"/>
    <property type="match status" value="1"/>
</dbReference>
<dbReference type="Pfam" id="PF07817">
    <property type="entry name" value="GLE1"/>
    <property type="match status" value="1"/>
</dbReference>
<accession>Q12315</accession>
<accession>D6VRE7</accession>
<sequence>MRFVFDEVFNSDTDSPEFEETCSTTSSTSSQCPTPEPSPAIKLPSFTKVGTKKLVNESVVILDPALENALRDLNLQSKLIPINEPIVAASSIIVPHSTNMPLPRASHSSLLDNAKNSNATAPLLEAIEESFQRKMQNLVLANQKEIQSIRENKRRVEEQRKRKEEEERKRKEAEEKAKREQELLRQKKDEEERKRKEAEAKLAQQKQEEERKKIEEQNEKERQLKKEHEAKLLQQKDKLGKAVTNFDKISKMFWHYKDKIAQIKQDIVLPIKKADVNVRNLLSRHKRKINPKFGQLTNSNQQLFKIQNELTQLINDTKGDSLAYHWILNFIAKAVVHQAETEVRVKPESALPLGKLTLYLLVQFPELQELFMARLVKKCPFVIGFTCEIDTEKGRQNMGWKRNNENKWEDNTSYDERMGGILSLFAIITRLQLPQEFITTTSHPFPIALSWHILARICNTPLNLITNTHFVILGSWWDAAAVQFLQAYGNQASKLLILIGEELTSRMAEKKYVGAARLRILLEAWQNNNMESFPEMSP</sequence>
<keyword id="KW-0002">3D-structure</keyword>
<keyword id="KW-0175">Coiled coil</keyword>
<keyword id="KW-0472">Membrane</keyword>
<keyword id="KW-0507">mRNA processing</keyword>
<keyword id="KW-0509">mRNA transport</keyword>
<keyword id="KW-0906">Nuclear pore complex</keyword>
<keyword id="KW-0539">Nucleus</keyword>
<keyword id="KW-0653">Protein transport</keyword>
<keyword id="KW-1185">Reference proteome</keyword>
<keyword id="KW-0811">Translocation</keyword>
<keyword id="KW-0813">Transport</keyword>
<reference key="1">
    <citation type="journal article" date="1996" name="Nature">
        <title>An RNA-export mediator with an essential nuclear export signal.</title>
        <authorList>
            <person name="Murphy R."/>
            <person name="Wente S.R."/>
        </authorList>
    </citation>
    <scope>NUCLEOTIDE SEQUENCE [GENOMIC DNA]</scope>
    <scope>MUTAGENESIS</scope>
</reference>
<reference key="2">
    <citation type="journal article" date="1997" name="Yeast">
        <title>The nucleotide sequence of a 39 kb segment of yeast chromosome IV: 12 new open reading frames, nine known genes and one gene for Gly-tRNA.</title>
        <authorList>
            <person name="Bahr A."/>
            <person name="Moeller-Rieker S."/>
            <person name="Hankeln T."/>
            <person name="Kraemer C."/>
            <person name="Protin U."/>
            <person name="Schmidt E.R."/>
        </authorList>
    </citation>
    <scope>NUCLEOTIDE SEQUENCE [GENOMIC DNA]</scope>
    <source>
        <strain>ATCC 96604 / S288c / FY1679</strain>
    </source>
</reference>
<reference key="3">
    <citation type="journal article" date="1997" name="Nature">
        <title>The nucleotide sequence of Saccharomyces cerevisiae chromosome IV.</title>
        <authorList>
            <person name="Jacq C."/>
            <person name="Alt-Moerbe J."/>
            <person name="Andre B."/>
            <person name="Arnold W."/>
            <person name="Bahr A."/>
            <person name="Ballesta J.P.G."/>
            <person name="Bargues M."/>
            <person name="Baron L."/>
            <person name="Becker A."/>
            <person name="Biteau N."/>
            <person name="Bloecker H."/>
            <person name="Blugeon C."/>
            <person name="Boskovic J."/>
            <person name="Brandt P."/>
            <person name="Brueckner M."/>
            <person name="Buitrago M.J."/>
            <person name="Coster F."/>
            <person name="Delaveau T."/>
            <person name="del Rey F."/>
            <person name="Dujon B."/>
            <person name="Eide L.G."/>
            <person name="Garcia-Cantalejo J.M."/>
            <person name="Goffeau A."/>
            <person name="Gomez-Peris A."/>
            <person name="Granotier C."/>
            <person name="Hanemann V."/>
            <person name="Hankeln T."/>
            <person name="Hoheisel J.D."/>
            <person name="Jaeger W."/>
            <person name="Jimenez A."/>
            <person name="Jonniaux J.-L."/>
            <person name="Kraemer C."/>
            <person name="Kuester H."/>
            <person name="Laamanen P."/>
            <person name="Legros Y."/>
            <person name="Louis E.J."/>
            <person name="Moeller-Rieker S."/>
            <person name="Monnet A."/>
            <person name="Moro M."/>
            <person name="Mueller-Auer S."/>
            <person name="Nussbaumer B."/>
            <person name="Paricio N."/>
            <person name="Paulin L."/>
            <person name="Perea J."/>
            <person name="Perez-Alonso M."/>
            <person name="Perez-Ortin J.E."/>
            <person name="Pohl T.M."/>
            <person name="Prydz H."/>
            <person name="Purnelle B."/>
            <person name="Rasmussen S.W."/>
            <person name="Remacha M.A."/>
            <person name="Revuelta J.L."/>
            <person name="Rieger M."/>
            <person name="Salom D."/>
            <person name="Saluz H.P."/>
            <person name="Saiz J.E."/>
            <person name="Saren A.-M."/>
            <person name="Schaefer M."/>
            <person name="Scharfe M."/>
            <person name="Schmidt E.R."/>
            <person name="Schneider C."/>
            <person name="Scholler P."/>
            <person name="Schwarz S."/>
            <person name="Soler-Mira A."/>
            <person name="Urrestarazu L.A."/>
            <person name="Verhasselt P."/>
            <person name="Vissers S."/>
            <person name="Voet M."/>
            <person name="Volckaert G."/>
            <person name="Wagner G."/>
            <person name="Wambutt R."/>
            <person name="Wedler E."/>
            <person name="Wedler H."/>
            <person name="Woelfl S."/>
            <person name="Harris D.E."/>
            <person name="Bowman S."/>
            <person name="Brown D."/>
            <person name="Churcher C.M."/>
            <person name="Connor R."/>
            <person name="Dedman K."/>
            <person name="Gentles S."/>
            <person name="Hamlin N."/>
            <person name="Hunt S."/>
            <person name="Jones L."/>
            <person name="McDonald S."/>
            <person name="Murphy L.D."/>
            <person name="Niblett D."/>
            <person name="Odell C."/>
            <person name="Oliver K."/>
            <person name="Rajandream M.A."/>
            <person name="Richards C."/>
            <person name="Shore L."/>
            <person name="Walsh S.V."/>
            <person name="Barrell B.G."/>
            <person name="Dietrich F.S."/>
            <person name="Mulligan J.T."/>
            <person name="Allen E."/>
            <person name="Araujo R."/>
            <person name="Aviles E."/>
            <person name="Berno A."/>
            <person name="Carpenter J."/>
            <person name="Chen E."/>
            <person name="Cherry J.M."/>
            <person name="Chung E."/>
            <person name="Duncan M."/>
            <person name="Hunicke-Smith S."/>
            <person name="Hyman R.W."/>
            <person name="Komp C."/>
            <person name="Lashkari D."/>
            <person name="Lew H."/>
            <person name="Lin D."/>
            <person name="Mosedale D."/>
            <person name="Nakahara K."/>
            <person name="Namath A."/>
            <person name="Oefner P."/>
            <person name="Oh C."/>
            <person name="Petel F.X."/>
            <person name="Roberts D."/>
            <person name="Schramm S."/>
            <person name="Schroeder M."/>
            <person name="Shogren T."/>
            <person name="Shroff N."/>
            <person name="Winant A."/>
            <person name="Yelton M.A."/>
            <person name="Botstein D."/>
            <person name="Davis R.W."/>
            <person name="Johnston M."/>
            <person name="Andrews S."/>
            <person name="Brinkman R."/>
            <person name="Cooper J."/>
            <person name="Ding H."/>
            <person name="Du Z."/>
            <person name="Favello A."/>
            <person name="Fulton L."/>
            <person name="Gattung S."/>
            <person name="Greco T."/>
            <person name="Hallsworth K."/>
            <person name="Hawkins J."/>
            <person name="Hillier L.W."/>
            <person name="Jier M."/>
            <person name="Johnson D."/>
            <person name="Johnston L."/>
            <person name="Kirsten J."/>
            <person name="Kucaba T."/>
            <person name="Langston Y."/>
            <person name="Latreille P."/>
            <person name="Le T."/>
            <person name="Mardis E."/>
            <person name="Menezes S."/>
            <person name="Miller N."/>
            <person name="Nhan M."/>
            <person name="Pauley A."/>
            <person name="Peluso D."/>
            <person name="Rifkin L."/>
            <person name="Riles L."/>
            <person name="Taich A."/>
            <person name="Trevaskis E."/>
            <person name="Vignati D."/>
            <person name="Wilcox L."/>
            <person name="Wohldman P."/>
            <person name="Vaudin M."/>
            <person name="Wilson R."/>
            <person name="Waterston R."/>
            <person name="Albermann K."/>
            <person name="Hani J."/>
            <person name="Heumann K."/>
            <person name="Kleine K."/>
            <person name="Mewes H.-W."/>
            <person name="Zollner A."/>
            <person name="Zaccaria P."/>
        </authorList>
    </citation>
    <scope>NUCLEOTIDE SEQUENCE [LARGE SCALE GENOMIC DNA]</scope>
    <source>
        <strain>ATCC 204508 / S288c</strain>
    </source>
</reference>
<reference key="4">
    <citation type="journal article" date="2014" name="G3 (Bethesda)">
        <title>The reference genome sequence of Saccharomyces cerevisiae: Then and now.</title>
        <authorList>
            <person name="Engel S.R."/>
            <person name="Dietrich F.S."/>
            <person name="Fisk D.G."/>
            <person name="Binkley G."/>
            <person name="Balakrishnan R."/>
            <person name="Costanzo M.C."/>
            <person name="Dwight S.S."/>
            <person name="Hitz B.C."/>
            <person name="Karra K."/>
            <person name="Nash R.S."/>
            <person name="Weng S."/>
            <person name="Wong E.D."/>
            <person name="Lloyd P."/>
            <person name="Skrzypek M.S."/>
            <person name="Miyasato S.R."/>
            <person name="Simison M."/>
            <person name="Cherry J.M."/>
        </authorList>
    </citation>
    <scope>GENOME REANNOTATION</scope>
    <source>
        <strain>ATCC 204508 / S288c</strain>
    </source>
</reference>
<reference key="5">
    <citation type="journal article" date="1999" name="EMBO J.">
        <title>The RNA export factor Gle1p is located on the cytoplasmic fibrils of the NPC and physically interacts with the FG-nucleoporin Rip1p, the DEAD-box protein Rat8p/Dbp5p and a new protein Ymr255p.</title>
        <authorList>
            <person name="Strahm Y."/>
            <person name="Fahrenkrog B."/>
            <person name="Zenklusen D."/>
            <person name="Rychner E."/>
            <person name="Kantor J."/>
            <person name="Rosbach M."/>
            <person name="Stutz F."/>
        </authorList>
    </citation>
    <scope>FUNCTION</scope>
    <scope>INTERACTION WITH NUP42; DBP5 AND GFD1</scope>
</reference>
<reference key="6">
    <citation type="journal article" date="1999" name="EMBO J.">
        <title>Rat8p/Dbp5p is a shuttling transport factor that interacts with Rat7p/Nup159p and Gle1p and suppresses the mRNA export defect of xpo1-1 cells.</title>
        <authorList>
            <person name="Hodge C.A."/>
            <person name="Colot H.V."/>
            <person name="Stafford P."/>
            <person name="Cole C.N."/>
        </authorList>
    </citation>
    <scope>FUNCTION</scope>
    <scope>SUBCELLULAR LOCATION</scope>
</reference>
<reference key="7">
    <citation type="journal article" date="2000" name="J. Cell Biol.">
        <title>The yeast nuclear pore complex: composition, architecture, and transport mechanism.</title>
        <authorList>
            <person name="Rout M.P."/>
            <person name="Aitchison J.D."/>
            <person name="Suprapto A."/>
            <person name="Hjertaas K."/>
            <person name="Zhao Y."/>
            <person name="Chait B.T."/>
        </authorList>
    </citation>
    <scope>FUNCTION</scope>
    <scope>NPC SUBUNIT LOCATION</scope>
</reference>
<reference key="8">
    <citation type="journal article" date="2001" name="Mol. Cell">
        <title>A block to mRNA nuclear export in S. cerevisiae leads to hyperadenylation of transcripts that accumulate at the site of transcription.</title>
        <authorList>
            <person name="Jensen T.H."/>
            <person name="Patricio K."/>
            <person name="McCarthy T."/>
            <person name="Rosbash M."/>
        </authorList>
    </citation>
    <scope>FUNCTION IN MRNA TRANSPORT</scope>
</reference>
<reference key="9">
    <citation type="journal article" date="2003" name="Nature">
        <title>Global analysis of protein expression in yeast.</title>
        <authorList>
            <person name="Ghaemmaghami S."/>
            <person name="Huh W.-K."/>
            <person name="Bower K."/>
            <person name="Howson R.W."/>
            <person name="Belle A."/>
            <person name="Dephoure N."/>
            <person name="O'Shea E.K."/>
            <person name="Weissman J.S."/>
        </authorList>
    </citation>
    <scope>LEVEL OF PROTEIN EXPRESSION [LARGE SCALE ANALYSIS]</scope>
</reference>
<reference key="10">
    <citation type="journal article" date="2004" name="J. Biol. Chem.">
        <title>Nuclear export of the yeast mRNA-binding protein Nab2 is linked to a direct interaction with Gfd1 and to Gle1 function.</title>
        <authorList>
            <person name="Suntharalingam M."/>
            <person name="Alcazar-Roman A.R."/>
            <person name="Wente S.R."/>
        </authorList>
    </citation>
    <scope>FUNCTION</scope>
    <scope>INTERACTION WITH NAB2</scope>
</reference>
<reference key="11">
    <citation type="journal article" date="2003" name="Dev. Cell">
        <title>Peering through the pore: nuclear pore complex structure, assembly, and function.</title>
        <authorList>
            <person name="Suntharalingam M."/>
            <person name="Wente S.R."/>
        </authorList>
    </citation>
    <scope>REVIEW</scope>
</reference>
<feature type="chain" id="PRO_0000204820" description="mRNA export factor GLE1">
    <location>
        <begin position="1"/>
        <end position="538"/>
    </location>
</feature>
<feature type="region of interest" description="Disordered" evidence="2">
    <location>
        <begin position="9"/>
        <end position="39"/>
    </location>
</feature>
<feature type="region of interest" description="Disordered" evidence="2">
    <location>
        <begin position="151"/>
        <end position="226"/>
    </location>
</feature>
<feature type="region of interest" description="Interactions with NUP42, DBP5 and GFD1">
    <location>
        <begin position="257"/>
        <end position="538"/>
    </location>
</feature>
<feature type="coiled-coil region" evidence="1">
    <location>
        <begin position="131"/>
        <end position="244"/>
    </location>
</feature>
<feature type="short sequence motif" description="Bipartite nuclear localization signal 1">
    <location>
        <begin position="154"/>
        <end position="170"/>
    </location>
</feature>
<feature type="short sequence motif" description="Bipartite nuclear localization signal 2">
    <location>
        <begin position="272"/>
        <end position="288"/>
    </location>
</feature>
<feature type="compositionally biased region" description="Low complexity" evidence="2">
    <location>
        <begin position="21"/>
        <end position="33"/>
    </location>
</feature>
<feature type="mutagenesis site" description="Partial loss of activity." evidence="9">
    <original>L</original>
    <variation>A</variation>
    <location>
        <position position="351"/>
    </location>
</feature>
<feature type="mutagenesis site" description="Partial loss of activity." evidence="9">
    <original>L</original>
    <variation>A</variation>
    <location>
        <position position="353"/>
    </location>
</feature>
<feature type="mutagenesis site" description="Temperature-sensitive." evidence="9">
    <original>L</original>
    <variation>A</variation>
    <location>
        <position position="356"/>
    </location>
</feature>
<feature type="mutagenesis site" description="Partial loss of activity." evidence="9">
    <original>L</original>
    <variation>A</variation>
    <location>
        <position position="358"/>
    </location>
</feature>
<feature type="helix" evidence="12">
    <location>
        <begin position="246"/>
        <end position="266"/>
    </location>
</feature>
<feature type="helix" evidence="12">
    <location>
        <begin position="268"/>
        <end position="272"/>
    </location>
</feature>
<feature type="helix" evidence="12">
    <location>
        <begin position="276"/>
        <end position="289"/>
    </location>
</feature>
<feature type="helix" evidence="12">
    <location>
        <begin position="290"/>
        <end position="295"/>
    </location>
</feature>
<feature type="helix" evidence="12">
    <location>
        <begin position="300"/>
        <end position="315"/>
    </location>
</feature>
<feature type="turn" evidence="12">
    <location>
        <begin position="316"/>
        <end position="319"/>
    </location>
</feature>
<feature type="helix" evidence="12">
    <location>
        <begin position="321"/>
        <end position="345"/>
    </location>
</feature>
<feature type="helix" evidence="12">
    <location>
        <begin position="347"/>
        <end position="349"/>
    </location>
</feature>
<feature type="helix" evidence="12">
    <location>
        <begin position="350"/>
        <end position="363"/>
    </location>
</feature>
<feature type="helix" evidence="12">
    <location>
        <begin position="367"/>
        <end position="378"/>
    </location>
</feature>
<feature type="helix" evidence="12">
    <location>
        <begin position="380"/>
        <end position="383"/>
    </location>
</feature>
<feature type="strand" evidence="12">
    <location>
        <begin position="389"/>
        <end position="391"/>
    </location>
</feature>
<feature type="helix" evidence="12">
    <location>
        <begin position="392"/>
        <end position="397"/>
    </location>
</feature>
<feature type="strand" evidence="12">
    <location>
        <begin position="402"/>
        <end position="406"/>
    </location>
</feature>
<feature type="helix" evidence="12">
    <location>
        <begin position="411"/>
        <end position="430"/>
    </location>
</feature>
<feature type="turn" evidence="12">
    <location>
        <begin position="435"/>
        <end position="440"/>
    </location>
</feature>
<feature type="helix" evidence="12">
    <location>
        <begin position="448"/>
        <end position="458"/>
    </location>
</feature>
<feature type="helix" evidence="12">
    <location>
        <begin position="462"/>
        <end position="464"/>
    </location>
</feature>
<feature type="helix" evidence="12">
    <location>
        <begin position="467"/>
        <end position="500"/>
    </location>
</feature>
<feature type="helix" evidence="12">
    <location>
        <begin position="502"/>
        <end position="506"/>
    </location>
</feature>
<feature type="helix" evidence="12">
    <location>
        <begin position="508"/>
        <end position="510"/>
    </location>
</feature>
<feature type="helix" evidence="12">
    <location>
        <begin position="513"/>
        <end position="526"/>
    </location>
</feature>
<protein>
    <recommendedName>
        <fullName evidence="11">mRNA export factor GLE1</fullName>
    </recommendedName>
    <alternativeName>
        <fullName evidence="11">Nuclear pore protein GLE1</fullName>
    </alternativeName>
    <alternativeName>
        <fullName evidence="11">Nucleoporin GLE1</fullName>
    </alternativeName>
    <alternativeName>
        <fullName evidence="10">RNA export factor GLE1</fullName>
    </alternativeName>
</protein>
<proteinExistence type="evidence at protein level"/>